<keyword id="KW-1185">Reference proteome</keyword>
<sequence>MPRANEIKKGMVLNYNGKLLLVKDIDIQSPTARGAATLYKMRFSDVRTGLKVEERFKGDDIVDTVTLTRRYVDFSYVDGNEYVFMDKEDYTPYTFTKDQIEEELLFMPEGGMPDMQVLTWDGQLLALELPQTVDLEIVETAPGIKGASASARNKPATLSTGLVIQVPEYLSPGEKIRIHIEERRYMGRAD</sequence>
<dbReference type="EMBL" id="AE005174">
    <property type="protein sequence ID" value="AAG57309.1"/>
    <property type="status" value="ALT_INIT"/>
    <property type="molecule type" value="Genomic_DNA"/>
</dbReference>
<dbReference type="EMBL" id="BA000007">
    <property type="protein sequence ID" value="BAB36486.1"/>
    <property type="status" value="ALT_INIT"/>
    <property type="molecule type" value="Genomic_DNA"/>
</dbReference>
<dbReference type="RefSeq" id="NP_311090.2">
    <property type="nucleotide sequence ID" value="NC_002695.1"/>
</dbReference>
<dbReference type="RefSeq" id="WP_001136827.1">
    <property type="nucleotide sequence ID" value="NZ_VOAI01000001.1"/>
</dbReference>
<dbReference type="SMR" id="P0A6P0"/>
<dbReference type="STRING" id="155864.Z3430"/>
<dbReference type="GeneID" id="916767"/>
<dbReference type="GeneID" id="93775010"/>
<dbReference type="KEGG" id="ece:Z3430"/>
<dbReference type="KEGG" id="ecs:ECs_3063"/>
<dbReference type="PATRIC" id="fig|386585.9.peg.3195"/>
<dbReference type="eggNOG" id="COG0231">
    <property type="taxonomic scope" value="Bacteria"/>
</dbReference>
<dbReference type="HOGENOM" id="CLU_074944_2_0_6"/>
<dbReference type="OMA" id="SNHHKPG"/>
<dbReference type="Proteomes" id="UP000000558">
    <property type="component" value="Chromosome"/>
</dbReference>
<dbReference type="Proteomes" id="UP000002519">
    <property type="component" value="Chromosome"/>
</dbReference>
<dbReference type="GO" id="GO:0005829">
    <property type="term" value="C:cytosol"/>
    <property type="evidence" value="ECO:0007669"/>
    <property type="project" value="UniProtKB-ARBA"/>
</dbReference>
<dbReference type="GO" id="GO:0003746">
    <property type="term" value="F:translation elongation factor activity"/>
    <property type="evidence" value="ECO:0007669"/>
    <property type="project" value="UniProtKB-UniRule"/>
</dbReference>
<dbReference type="GO" id="GO:0043043">
    <property type="term" value="P:peptide biosynthetic process"/>
    <property type="evidence" value="ECO:0007669"/>
    <property type="project" value="InterPro"/>
</dbReference>
<dbReference type="CDD" id="cd04470">
    <property type="entry name" value="S1_EF-P_repeat_1"/>
    <property type="match status" value="1"/>
</dbReference>
<dbReference type="CDD" id="cd05794">
    <property type="entry name" value="S1_EF-P_repeat_2"/>
    <property type="match status" value="1"/>
</dbReference>
<dbReference type="FunFam" id="2.40.50.140:FF:000004">
    <property type="entry name" value="Elongation factor P"/>
    <property type="match status" value="1"/>
</dbReference>
<dbReference type="FunFam" id="2.30.30.30:FF:000011">
    <property type="entry name" value="Elongation factor P-like protein"/>
    <property type="match status" value="1"/>
</dbReference>
<dbReference type="FunFam" id="2.40.50.140:FF:000053">
    <property type="entry name" value="Elongation factor P-like protein"/>
    <property type="match status" value="1"/>
</dbReference>
<dbReference type="Gene3D" id="2.30.30.30">
    <property type="match status" value="1"/>
</dbReference>
<dbReference type="Gene3D" id="2.40.50.140">
    <property type="entry name" value="Nucleic acid-binding proteins"/>
    <property type="match status" value="2"/>
</dbReference>
<dbReference type="HAMAP" id="MF_00646">
    <property type="entry name" value="EFP"/>
    <property type="match status" value="1"/>
</dbReference>
<dbReference type="InterPro" id="IPR015365">
    <property type="entry name" value="Elong-fact-P_C"/>
</dbReference>
<dbReference type="InterPro" id="IPR012340">
    <property type="entry name" value="NA-bd_OB-fold"/>
</dbReference>
<dbReference type="InterPro" id="IPR014722">
    <property type="entry name" value="Rib_uL2_dom2"/>
</dbReference>
<dbReference type="InterPro" id="IPR020599">
    <property type="entry name" value="Transl_elong_fac_P/YeiP"/>
</dbReference>
<dbReference type="InterPro" id="IPR013185">
    <property type="entry name" value="Transl_elong_KOW-like"/>
</dbReference>
<dbReference type="InterPro" id="IPR011897">
    <property type="entry name" value="Transl_elong_p-like_YeiP"/>
</dbReference>
<dbReference type="InterPro" id="IPR001059">
    <property type="entry name" value="Transl_elong_P/YeiP_cen"/>
</dbReference>
<dbReference type="InterPro" id="IPR013852">
    <property type="entry name" value="Transl_elong_P/YeiP_CS"/>
</dbReference>
<dbReference type="InterPro" id="IPR008991">
    <property type="entry name" value="Translation_prot_SH3-like_sf"/>
</dbReference>
<dbReference type="NCBIfam" id="NF001810">
    <property type="entry name" value="PRK00529.1"/>
    <property type="match status" value="1"/>
</dbReference>
<dbReference type="NCBIfam" id="NF003392">
    <property type="entry name" value="PRK04542.1"/>
    <property type="match status" value="1"/>
</dbReference>
<dbReference type="NCBIfam" id="TIGR02178">
    <property type="entry name" value="yeiP"/>
    <property type="match status" value="1"/>
</dbReference>
<dbReference type="PANTHER" id="PTHR30053">
    <property type="entry name" value="ELONGATION FACTOR P"/>
    <property type="match status" value="1"/>
</dbReference>
<dbReference type="PANTHER" id="PTHR30053:SF14">
    <property type="entry name" value="TRANSLATION ELONGATION FACTOR KOW-LIKE DOMAIN-CONTAINING PROTEIN"/>
    <property type="match status" value="1"/>
</dbReference>
<dbReference type="Pfam" id="PF01132">
    <property type="entry name" value="EFP"/>
    <property type="match status" value="1"/>
</dbReference>
<dbReference type="Pfam" id="PF08207">
    <property type="entry name" value="EFP_N"/>
    <property type="match status" value="1"/>
</dbReference>
<dbReference type="Pfam" id="PF09285">
    <property type="entry name" value="Elong-fact-P_C"/>
    <property type="match status" value="1"/>
</dbReference>
<dbReference type="PIRSF" id="PIRSF005901">
    <property type="entry name" value="EF-P"/>
    <property type="match status" value="1"/>
</dbReference>
<dbReference type="SMART" id="SM01185">
    <property type="entry name" value="EFP"/>
    <property type="match status" value="1"/>
</dbReference>
<dbReference type="SMART" id="SM00841">
    <property type="entry name" value="Elong-fact-P_C"/>
    <property type="match status" value="1"/>
</dbReference>
<dbReference type="SUPFAM" id="SSF50249">
    <property type="entry name" value="Nucleic acid-binding proteins"/>
    <property type="match status" value="2"/>
</dbReference>
<dbReference type="SUPFAM" id="SSF50104">
    <property type="entry name" value="Translation proteins SH3-like domain"/>
    <property type="match status" value="1"/>
</dbReference>
<dbReference type="PROSITE" id="PS01275">
    <property type="entry name" value="EFP"/>
    <property type="match status" value="1"/>
</dbReference>
<accession>P0A6P0</accession>
<accession>P33028</accession>
<accession>Q8XE90</accession>
<comment type="similarity">
    <text evidence="1">Belongs to the elongation factor P family.</text>
</comment>
<comment type="sequence caution" evidence="1">
    <conflict type="erroneous initiation">
        <sequence resource="EMBL-CDS" id="AAG57309"/>
    </conflict>
</comment>
<comment type="sequence caution" evidence="1">
    <conflict type="erroneous initiation">
        <sequence resource="EMBL-CDS" id="BAB36486"/>
    </conflict>
</comment>
<organism>
    <name type="scientific">Escherichia coli O157:H7</name>
    <dbReference type="NCBI Taxonomy" id="83334"/>
    <lineage>
        <taxon>Bacteria</taxon>
        <taxon>Pseudomonadati</taxon>
        <taxon>Pseudomonadota</taxon>
        <taxon>Gammaproteobacteria</taxon>
        <taxon>Enterobacterales</taxon>
        <taxon>Enterobacteriaceae</taxon>
        <taxon>Escherichia</taxon>
    </lineage>
</organism>
<reference key="1">
    <citation type="journal article" date="2001" name="Nature">
        <title>Genome sequence of enterohaemorrhagic Escherichia coli O157:H7.</title>
        <authorList>
            <person name="Perna N.T."/>
            <person name="Plunkett G. III"/>
            <person name="Burland V."/>
            <person name="Mau B."/>
            <person name="Glasner J.D."/>
            <person name="Rose D.J."/>
            <person name="Mayhew G.F."/>
            <person name="Evans P.S."/>
            <person name="Gregor J."/>
            <person name="Kirkpatrick H.A."/>
            <person name="Posfai G."/>
            <person name="Hackett J."/>
            <person name="Klink S."/>
            <person name="Boutin A."/>
            <person name="Shao Y."/>
            <person name="Miller L."/>
            <person name="Grotbeck E.J."/>
            <person name="Davis N.W."/>
            <person name="Lim A."/>
            <person name="Dimalanta E.T."/>
            <person name="Potamousis K."/>
            <person name="Apodaca J."/>
            <person name="Anantharaman T.S."/>
            <person name="Lin J."/>
            <person name="Yen G."/>
            <person name="Schwartz D.C."/>
            <person name="Welch R.A."/>
            <person name="Blattner F.R."/>
        </authorList>
    </citation>
    <scope>NUCLEOTIDE SEQUENCE [LARGE SCALE GENOMIC DNA]</scope>
    <source>
        <strain>O157:H7 / EDL933 / ATCC 700927 / EHEC</strain>
    </source>
</reference>
<reference key="2">
    <citation type="journal article" date="2001" name="DNA Res.">
        <title>Complete genome sequence of enterohemorrhagic Escherichia coli O157:H7 and genomic comparison with a laboratory strain K-12.</title>
        <authorList>
            <person name="Hayashi T."/>
            <person name="Makino K."/>
            <person name="Ohnishi M."/>
            <person name="Kurokawa K."/>
            <person name="Ishii K."/>
            <person name="Yokoyama K."/>
            <person name="Han C.-G."/>
            <person name="Ohtsubo E."/>
            <person name="Nakayama K."/>
            <person name="Murata T."/>
            <person name="Tanaka M."/>
            <person name="Tobe T."/>
            <person name="Iida T."/>
            <person name="Takami H."/>
            <person name="Honda T."/>
            <person name="Sasakawa C."/>
            <person name="Ogasawara N."/>
            <person name="Yasunaga T."/>
            <person name="Kuhara S."/>
            <person name="Shiba T."/>
            <person name="Hattori M."/>
            <person name="Shinagawa H."/>
        </authorList>
    </citation>
    <scope>NUCLEOTIDE SEQUENCE [LARGE SCALE GENOMIC DNA]</scope>
    <source>
        <strain>O157:H7 / Sakai / RIMD 0509952 / EHEC</strain>
    </source>
</reference>
<feature type="chain" id="PRO_0000094381" description="Elongation factor P-like protein">
    <location>
        <begin position="1"/>
        <end position="190"/>
    </location>
</feature>
<protein>
    <recommendedName>
        <fullName>Elongation factor P-like protein</fullName>
    </recommendedName>
</protein>
<proteinExistence type="inferred from homology"/>
<evidence type="ECO:0000305" key="1"/>
<name>EFPL_ECO57</name>
<gene>
    <name type="primary">yeiP</name>
    <name type="ordered locus">Z3430</name>
    <name type="ordered locus">ECs3063</name>
</gene>